<organism>
    <name type="scientific">Caenorhabditis elegans</name>
    <dbReference type="NCBI Taxonomy" id="6239"/>
    <lineage>
        <taxon>Eukaryota</taxon>
        <taxon>Metazoa</taxon>
        <taxon>Ecdysozoa</taxon>
        <taxon>Nematoda</taxon>
        <taxon>Chromadorea</taxon>
        <taxon>Rhabditida</taxon>
        <taxon>Rhabditina</taxon>
        <taxon>Rhabditomorpha</taxon>
        <taxon>Rhabditoidea</taxon>
        <taxon>Rhabditidae</taxon>
        <taxon>Peloderinae</taxon>
        <taxon>Caenorhabditis</taxon>
    </lineage>
</organism>
<comment type="function">
    <text evidence="2">Catalyzes the post-translational formation of 4-hydroxyproline in -Xaa-Pro-Gly- sequences in collagens and other proteins.</text>
</comment>
<comment type="catalytic activity">
    <reaction>
        <text>L-prolyl-[collagen] + 2-oxoglutarate + O2 = trans-4-hydroxy-L-prolyl-[collagen] + succinate + CO2</text>
        <dbReference type="Rhea" id="RHEA:18945"/>
        <dbReference type="Rhea" id="RHEA-COMP:11676"/>
        <dbReference type="Rhea" id="RHEA-COMP:11680"/>
        <dbReference type="ChEBI" id="CHEBI:15379"/>
        <dbReference type="ChEBI" id="CHEBI:16526"/>
        <dbReference type="ChEBI" id="CHEBI:16810"/>
        <dbReference type="ChEBI" id="CHEBI:30031"/>
        <dbReference type="ChEBI" id="CHEBI:50342"/>
        <dbReference type="ChEBI" id="CHEBI:61965"/>
        <dbReference type="EC" id="1.14.11.2"/>
    </reaction>
</comment>
<comment type="cofactor">
    <cofactor>
        <name>Fe(2+)</name>
        <dbReference type="ChEBI" id="CHEBI:29033"/>
    </cofactor>
    <text>Binds 1 Fe(2+) ion per subunit.</text>
</comment>
<comment type="cofactor">
    <cofactor>
        <name>L-ascorbate</name>
        <dbReference type="ChEBI" id="CHEBI:38290"/>
    </cofactor>
</comment>
<comment type="subunit">
    <text evidence="3">Heterotetramer of two alpha chains and two beta chains. Exists either as a phy-1(2)/pdi-2(2) tetramer or as a phy-1/phy-2/pdi-2(2) tetramer.</text>
</comment>
<comment type="subcellular location">
    <subcellularLocation>
        <location>Endoplasmic reticulum lumen</location>
    </subcellularLocation>
</comment>
<comment type="similarity">
    <text evidence="6">Belongs to the P4HA family.</text>
</comment>
<keyword id="KW-0223">Dioxygenase</keyword>
<keyword id="KW-0903">Direct protein sequencing</keyword>
<keyword id="KW-0256">Endoplasmic reticulum</keyword>
<keyword id="KW-0325">Glycoprotein</keyword>
<keyword id="KW-0408">Iron</keyword>
<keyword id="KW-0479">Metal-binding</keyword>
<keyword id="KW-0560">Oxidoreductase</keyword>
<keyword id="KW-1185">Reference proteome</keyword>
<keyword id="KW-0732">Signal</keyword>
<keyword id="KW-0847">Vitamin C</keyword>
<dbReference type="EC" id="1.14.11.2"/>
<dbReference type="EMBL" id="U12762">
    <property type="protein sequence ID" value="AAA62207.1"/>
    <property type="molecule type" value="mRNA"/>
</dbReference>
<dbReference type="EMBL" id="AJ270999">
    <property type="protein sequence ID" value="CAB71298.1"/>
    <property type="molecule type" value="mRNA"/>
</dbReference>
<dbReference type="EMBL" id="AL031635">
    <property type="protein sequence ID" value="CAA21045.1"/>
    <property type="molecule type" value="Genomic_DNA"/>
</dbReference>
<dbReference type="EMBL" id="Z81134">
    <property type="protein sequence ID" value="CAA21045.1"/>
    <property type="status" value="JOINED"/>
    <property type="molecule type" value="Genomic_DNA"/>
</dbReference>
<dbReference type="PIR" id="A55069">
    <property type="entry name" value="A55069"/>
</dbReference>
<dbReference type="PIR" id="T25418">
    <property type="entry name" value="T25418"/>
</dbReference>
<dbReference type="RefSeq" id="NP_499464.1">
    <property type="nucleotide sequence ID" value="NM_067063.6"/>
</dbReference>
<dbReference type="SMR" id="Q10576"/>
<dbReference type="BioGRID" id="41751">
    <property type="interactions" value="14"/>
</dbReference>
<dbReference type="FunCoup" id="Q10576">
    <property type="interactions" value="931"/>
</dbReference>
<dbReference type="STRING" id="6239.Y47D3B.10.1"/>
<dbReference type="GlyCosmos" id="Q10576">
    <property type="glycosylation" value="1 site, No reported glycans"/>
</dbReference>
<dbReference type="iPTMnet" id="Q10576"/>
<dbReference type="PaxDb" id="6239-Y47D3B.10"/>
<dbReference type="PeptideAtlas" id="Q10576"/>
<dbReference type="EnsemblMetazoa" id="Y47D3B.10.1">
    <property type="protein sequence ID" value="Y47D3B.10.1"/>
    <property type="gene ID" value="WBGene00001077"/>
</dbReference>
<dbReference type="GeneID" id="176569"/>
<dbReference type="KEGG" id="cel:CELE_Y47D3B.10"/>
<dbReference type="UCSC" id="Y47D3B.10.2">
    <property type="organism name" value="c. elegans"/>
</dbReference>
<dbReference type="AGR" id="WB:WBGene00001077"/>
<dbReference type="CTD" id="176569"/>
<dbReference type="WormBase" id="Y47D3B.10">
    <property type="protein sequence ID" value="CE20261"/>
    <property type="gene ID" value="WBGene00001077"/>
    <property type="gene designation" value="dpy-18"/>
</dbReference>
<dbReference type="eggNOG" id="KOG1591">
    <property type="taxonomic scope" value="Eukaryota"/>
</dbReference>
<dbReference type="HOGENOM" id="CLU_024155_1_1_1"/>
<dbReference type="InParanoid" id="Q10576"/>
<dbReference type="OMA" id="MLLMAWF"/>
<dbReference type="OrthoDB" id="420380at2759"/>
<dbReference type="PhylomeDB" id="Q10576"/>
<dbReference type="Reactome" id="R-CEL-1650814">
    <property type="pathway name" value="Collagen biosynthesis and modifying enzymes"/>
</dbReference>
<dbReference type="PRO" id="PR:Q10576"/>
<dbReference type="Proteomes" id="UP000001940">
    <property type="component" value="Chromosome III"/>
</dbReference>
<dbReference type="Bgee" id="WBGene00001077">
    <property type="expression patterns" value="Expressed in embryo and 4 other cell types or tissues"/>
</dbReference>
<dbReference type="GO" id="GO:0005783">
    <property type="term" value="C:endoplasmic reticulum"/>
    <property type="evidence" value="ECO:0000314"/>
    <property type="project" value="WormBase"/>
</dbReference>
<dbReference type="GO" id="GO:0005788">
    <property type="term" value="C:endoplasmic reticulum lumen"/>
    <property type="evidence" value="ECO:0007669"/>
    <property type="project" value="UniProtKB-SubCell"/>
</dbReference>
<dbReference type="GO" id="GO:0005506">
    <property type="term" value="F:iron ion binding"/>
    <property type="evidence" value="ECO:0007669"/>
    <property type="project" value="InterPro"/>
</dbReference>
<dbReference type="GO" id="GO:0031418">
    <property type="term" value="F:L-ascorbic acid binding"/>
    <property type="evidence" value="ECO:0007669"/>
    <property type="project" value="UniProtKB-KW"/>
</dbReference>
<dbReference type="GO" id="GO:0031545">
    <property type="term" value="F:peptidyl-proline 4-dioxygenase activity"/>
    <property type="evidence" value="ECO:0000314"/>
    <property type="project" value="WormBase"/>
</dbReference>
<dbReference type="GO" id="GO:0004656">
    <property type="term" value="F:procollagen-proline 4-dioxygenase activity"/>
    <property type="evidence" value="ECO:0000314"/>
    <property type="project" value="WormBase"/>
</dbReference>
<dbReference type="GO" id="GO:0040002">
    <property type="term" value="P:collagen and cuticulin-based cuticle development"/>
    <property type="evidence" value="ECO:0000315"/>
    <property type="project" value="WormBase"/>
</dbReference>
<dbReference type="GO" id="GO:0042338">
    <property type="term" value="P:cuticle development involved in collagen and cuticulin-based cuticle molting cycle"/>
    <property type="evidence" value="ECO:0000315"/>
    <property type="project" value="WormBase"/>
</dbReference>
<dbReference type="GO" id="GO:0009792">
    <property type="term" value="P:embryo development ending in birth or egg hatching"/>
    <property type="evidence" value="ECO:0000315"/>
    <property type="project" value="WormBase"/>
</dbReference>
<dbReference type="GO" id="GO:0010172">
    <property type="term" value="P:embryonic body morphogenesis"/>
    <property type="evidence" value="ECO:0000316"/>
    <property type="project" value="WormBase"/>
</dbReference>
<dbReference type="GO" id="GO:0036498">
    <property type="term" value="P:IRE1-mediated unfolded protein response"/>
    <property type="evidence" value="ECO:0007007"/>
    <property type="project" value="WormBase"/>
</dbReference>
<dbReference type="GO" id="GO:0043412">
    <property type="term" value="P:macromolecule modification"/>
    <property type="evidence" value="ECO:0000314"/>
    <property type="project" value="WormBase"/>
</dbReference>
<dbReference type="GO" id="GO:0040018">
    <property type="term" value="P:positive regulation of multicellular organism growth"/>
    <property type="evidence" value="ECO:0000316"/>
    <property type="project" value="WormBase"/>
</dbReference>
<dbReference type="FunFam" id="1.25.40.10:FF:000006">
    <property type="entry name" value="Prolyl 4-hydroxylase subunit alpha 2"/>
    <property type="match status" value="1"/>
</dbReference>
<dbReference type="FunFam" id="2.60.120.620:FF:000001">
    <property type="entry name" value="Prolyl 4-hydroxylase subunit alpha 2"/>
    <property type="match status" value="1"/>
</dbReference>
<dbReference type="Gene3D" id="6.10.140.1460">
    <property type="match status" value="1"/>
</dbReference>
<dbReference type="Gene3D" id="2.60.120.620">
    <property type="entry name" value="q2cbj1_9rhob like domain"/>
    <property type="match status" value="1"/>
</dbReference>
<dbReference type="Gene3D" id="1.25.40.10">
    <property type="entry name" value="Tetratricopeptide repeat domain"/>
    <property type="match status" value="1"/>
</dbReference>
<dbReference type="InterPro" id="IPR005123">
    <property type="entry name" value="Oxoglu/Fe-dep_dioxygenase_dom"/>
</dbReference>
<dbReference type="InterPro" id="IPR045054">
    <property type="entry name" value="P4HA-like"/>
</dbReference>
<dbReference type="InterPro" id="IPR006620">
    <property type="entry name" value="Pro_4_hyd_alph"/>
</dbReference>
<dbReference type="InterPro" id="IPR044862">
    <property type="entry name" value="Pro_4_hyd_alph_FE2OG_OXY"/>
</dbReference>
<dbReference type="InterPro" id="IPR013547">
    <property type="entry name" value="Pro_4_hyd_alph_N"/>
</dbReference>
<dbReference type="InterPro" id="IPR011990">
    <property type="entry name" value="TPR-like_helical_dom_sf"/>
</dbReference>
<dbReference type="PANTHER" id="PTHR10869">
    <property type="entry name" value="PROLYL 4-HYDROXYLASE ALPHA SUBUNIT"/>
    <property type="match status" value="1"/>
</dbReference>
<dbReference type="PANTHER" id="PTHR10869:SF244">
    <property type="entry name" value="PROLYL 4-HYDROXYLASE SUBUNIT ALPHA-2"/>
    <property type="match status" value="1"/>
</dbReference>
<dbReference type="Pfam" id="PF13640">
    <property type="entry name" value="2OG-FeII_Oxy_3"/>
    <property type="match status" value="1"/>
</dbReference>
<dbReference type="Pfam" id="PF08336">
    <property type="entry name" value="P4Ha_N"/>
    <property type="match status" value="1"/>
</dbReference>
<dbReference type="Pfam" id="PF23558">
    <property type="entry name" value="TPR_P4H"/>
    <property type="match status" value="1"/>
</dbReference>
<dbReference type="SMART" id="SM00702">
    <property type="entry name" value="P4Hc"/>
    <property type="match status" value="1"/>
</dbReference>
<dbReference type="SUPFAM" id="SSF48452">
    <property type="entry name" value="TPR-like"/>
    <property type="match status" value="1"/>
</dbReference>
<dbReference type="PROSITE" id="PS51471">
    <property type="entry name" value="FE2OG_OXY"/>
    <property type="match status" value="1"/>
</dbReference>
<proteinExistence type="evidence at protein level"/>
<name>P4HA1_CAEEL</name>
<protein>
    <recommendedName>
        <fullName>Prolyl 4-hydroxylase subunit alpha-1</fullName>
        <shortName>4-PH alpha-1</shortName>
        <ecNumber>1.14.11.2</ecNumber>
    </recommendedName>
    <alternativeName>
        <fullName>Procollagen-proline,2-oxoglutarate-4-dioxygenase subunit alpha-1</fullName>
    </alternativeName>
    <alternativeName>
        <fullName>Protein dumpy-18</fullName>
    </alternativeName>
</protein>
<evidence type="ECO:0000255" key="1">
    <source>
        <dbReference type="PROSITE-ProRule" id="PRU00805"/>
    </source>
</evidence>
<evidence type="ECO:0000269" key="2">
    <source>
    </source>
</evidence>
<evidence type="ECO:0000269" key="3">
    <source>
    </source>
</evidence>
<evidence type="ECO:0000269" key="4">
    <source>
    </source>
</evidence>
<evidence type="ECO:0000269" key="5">
    <source>
    </source>
</evidence>
<evidence type="ECO:0000305" key="6"/>
<reference key="1">
    <citation type="journal article" date="1994" name="J. Biol. Chem.">
        <title>Cloning, baculovirus expression, and characterization of the alpha subunit of prolyl 4-hydroxylase from the nematode Caenorhabditis elegans. This alpha subunit forms an active alpha beta dimer with the human protein disulfide isomerase/beta subunit.</title>
        <authorList>
            <person name="Veijola J."/>
            <person name="Koivunen P."/>
            <person name="Annunen P."/>
            <person name="Pihlajaniemi T."/>
            <person name="Kivirikko K.I."/>
        </authorList>
    </citation>
    <scope>NUCLEOTIDE SEQUENCE [MRNA]</scope>
    <scope>PARTIAL PROTEIN SEQUENCE</scope>
</reference>
<reference key="2">
    <citation type="journal article" date="2000" name="Mol. Cell. Biol.">
        <title>Prolyl 4-hydroxylase is an essential procollagen-modifying enzyme required for exoskeleton formation and the maintenance of body shape in the nematode Caenorhabditis elegans.</title>
        <authorList>
            <person name="Winter A.D."/>
            <person name="Page A.P."/>
        </authorList>
    </citation>
    <scope>NUCLEOTIDE SEQUENCE [MRNA]</scope>
    <scope>FUNCTION</scope>
    <source>
        <strain>Bristol N2</strain>
    </source>
</reference>
<reference key="3">
    <citation type="journal article" date="1998" name="Science">
        <title>Genome sequence of the nematode C. elegans: a platform for investigating biology.</title>
        <authorList>
            <consortium name="The C. elegans sequencing consortium"/>
        </authorList>
    </citation>
    <scope>NUCLEOTIDE SEQUENCE [LARGE SCALE GENOMIC DNA]</scope>
    <source>
        <strain>Bristol N2</strain>
    </source>
</reference>
<reference key="4">
    <citation type="journal article" date="2002" name="J. Biol. Chem.">
        <title>The exoskeleton collagens in Caenorhabditis elegans are modified by prolyl 4-hydroxylases with unique combinations of subunits.</title>
        <authorList>
            <person name="Myllyharju J."/>
            <person name="Kukkola L."/>
            <person name="Winter A.D."/>
            <person name="Page A.P."/>
        </authorList>
    </citation>
    <scope>SUBUNIT</scope>
</reference>
<reference key="5">
    <citation type="journal article" date="2003" name="Nat. Biotechnol.">
        <title>Lectin affinity capture, isotope-coded tagging and mass spectrometry to identify N-linked glycoproteins.</title>
        <authorList>
            <person name="Kaji H."/>
            <person name="Saito H."/>
            <person name="Yamauchi Y."/>
            <person name="Shinkawa T."/>
            <person name="Taoka M."/>
            <person name="Hirabayashi J."/>
            <person name="Kasai K."/>
            <person name="Takahashi N."/>
            <person name="Isobe T."/>
        </authorList>
    </citation>
    <scope>GLYCOSYLATION [LARGE SCALE ANALYSIS] AT ASN-158</scope>
    <scope>IDENTIFICATION BY MASS SPECTROMETRY</scope>
    <source>
        <strain>Bristol N2</strain>
    </source>
</reference>
<reference key="6">
    <citation type="journal article" date="2007" name="Mol. Cell. Proteomics">
        <title>Proteomics reveals N-linked glycoprotein diversity in Caenorhabditis elegans and suggests an atypical translocation mechanism for integral membrane proteins.</title>
        <authorList>
            <person name="Kaji H."/>
            <person name="Kamiie J."/>
            <person name="Kawakami H."/>
            <person name="Kido K."/>
            <person name="Yamauchi Y."/>
            <person name="Shinkawa T."/>
            <person name="Taoka M."/>
            <person name="Takahashi N."/>
            <person name="Isobe T."/>
        </authorList>
    </citation>
    <scope>GLYCOSYLATION [LARGE SCALE ANALYSIS] AT ASN-158</scope>
    <scope>IDENTIFICATION BY MASS SPECTROMETRY</scope>
    <source>
        <strain>Bristol N2</strain>
    </source>
</reference>
<feature type="signal peptide">
    <location>
        <begin position="1"/>
        <end position="16"/>
    </location>
</feature>
<feature type="chain" id="PRO_0000022728" description="Prolyl 4-hydroxylase subunit alpha-1">
    <location>
        <begin position="17"/>
        <end position="559"/>
    </location>
</feature>
<feature type="domain" description="Fe2OG dioxygenase" evidence="1">
    <location>
        <begin position="404"/>
        <end position="512"/>
    </location>
</feature>
<feature type="binding site" evidence="1">
    <location>
        <position position="422"/>
    </location>
    <ligand>
        <name>Fe cation</name>
        <dbReference type="ChEBI" id="CHEBI:24875"/>
    </ligand>
</feature>
<feature type="binding site" evidence="1">
    <location>
        <position position="424"/>
    </location>
    <ligand>
        <name>Fe cation</name>
        <dbReference type="ChEBI" id="CHEBI:24875"/>
    </ligand>
</feature>
<feature type="binding site" evidence="1">
    <location>
        <position position="493"/>
    </location>
    <ligand>
        <name>Fe cation</name>
        <dbReference type="ChEBI" id="CHEBI:24875"/>
    </ligand>
</feature>
<feature type="binding site" evidence="1">
    <location>
        <position position="503"/>
    </location>
    <ligand>
        <name>2-oxoglutarate</name>
        <dbReference type="ChEBI" id="CHEBI:16810"/>
    </ligand>
</feature>
<feature type="glycosylation site" description="N-linked (GlcNAc...) asparagine" evidence="4 5">
    <location>
        <position position="158"/>
    </location>
</feature>
<feature type="sequence conflict" description="In Ref. 1; AAA62207." evidence="6" ref="1">
    <original>QKDIS</original>
    <variation>RRHL</variation>
    <location>
        <begin position="297"/>
        <end position="301"/>
    </location>
</feature>
<feature type="sequence conflict" description="In Ref. 1; AAA62207." evidence="6" ref="1">
    <original>KRDRP</original>
    <variation>LAGPS</variation>
    <location>
        <begin position="308"/>
        <end position="312"/>
    </location>
</feature>
<accession>Q10576</accession>
<accession>O18153</accession>
<gene>
    <name type="primary">dpy-18</name>
    <name type="synonym">phy-1</name>
    <name type="ORF">Y47D3B.10</name>
</gene>
<sequence length="559" mass="63927">MRLALLVLATIGYAVADLFTSIADMQNLLETERNIPKILDKYIHDEEERLVQLKKLSEEYSKKNEISIENGLKDITNPINAFLLIKRKIFDWKEIESKMNANKAGNVVSSITDDSYGVRYPTADDLSGAAIGLLRLQDTYRLDTKDLADGKIYADQGNYTFSAKDCFEIARAAYNEHDFYHTVMWMEEAQRRLGDEVEPTVEVEDILEYLAFALYKQNNLKHALKLTEELYKMNPTHPRAKGNVKWYEDLLEQEGVRRSDMRKNLPPIQNRRPDSVLGNTERTMYEALCRNEVPVSQKDISRLYCYYKRDRPFLVYAPIKVEIKRFNPLAVLFKDVISDDEVAAIQELAKPKLARATVHDSVTGKLVTATYRISKSAWLKEWEGDVVETVNKRIGYMTNLEMETAEELQIANYGIGGHYDPHFDHAKKEESKSFESLGTGNRIATVLFYMSQPSHGGGTVFTEAKSTILPTKNDALFWYNLYKQGDGNPDTRHAACPVLVGIKWVSNKWIHEKGNEFRRPCGLKSSDYERFVGDLGYGPEPRNAPNVSPNLAKDVWETL</sequence>